<reference key="1">
    <citation type="journal article" date="2004" name="J. Bacteriol.">
        <title>Complete genome sequence of the genetically tractable hydrogenotrophic methanogen Methanococcus maripaludis.</title>
        <authorList>
            <person name="Hendrickson E.L."/>
            <person name="Kaul R."/>
            <person name="Zhou Y."/>
            <person name="Bovee D."/>
            <person name="Chapman P."/>
            <person name="Chung J."/>
            <person name="Conway de Macario E."/>
            <person name="Dodsworth J.A."/>
            <person name="Gillett W."/>
            <person name="Graham D.E."/>
            <person name="Hackett M."/>
            <person name="Haydock A.K."/>
            <person name="Kang A."/>
            <person name="Land M.L."/>
            <person name="Levy R."/>
            <person name="Lie T.J."/>
            <person name="Major T.A."/>
            <person name="Moore B.C."/>
            <person name="Porat I."/>
            <person name="Palmeiri A."/>
            <person name="Rouse G."/>
            <person name="Saenphimmachak C."/>
            <person name="Soell D."/>
            <person name="Van Dien S."/>
            <person name="Wang T."/>
            <person name="Whitman W.B."/>
            <person name="Xia Q."/>
            <person name="Zhang Y."/>
            <person name="Larimer F.W."/>
            <person name="Olson M.V."/>
            <person name="Leigh J.A."/>
        </authorList>
    </citation>
    <scope>NUCLEOTIDE SEQUENCE [LARGE SCALE GENOMIC DNA]</scope>
    <source>
        <strain>DSM 14266 / JCM 13030 / NBRC 101832 / S2 / LL</strain>
    </source>
</reference>
<reference key="2">
    <citation type="journal article" date="2006" name="Mol. Microbiol.">
        <title>Biochemical and genetic characterization of an early step in a novel pathway for the biosynthesis of aromatic amino acids and p-aminobenzoic acid in the archaeon Methanococcus maripaludis.</title>
        <authorList>
            <person name="Porat I."/>
            <person name="Sieprawska-Lupa M."/>
            <person name="Teng Q."/>
            <person name="Bohanon F.J."/>
            <person name="White R.H."/>
            <person name="Whitman W.B."/>
        </authorList>
    </citation>
    <scope>GENE NAME</scope>
    <scope>PATHWAY</scope>
    <scope>DISRUPTION PHENOTYPE</scope>
    <source>
        <strain>DSM 14266 / JCM 13030 / NBRC 101832 / S2 / LL</strain>
    </source>
</reference>
<organism>
    <name type="scientific">Methanococcus maripaludis (strain DSM 14266 / JCM 13030 / NBRC 101832 / S2 / LL)</name>
    <dbReference type="NCBI Taxonomy" id="267377"/>
    <lineage>
        <taxon>Archaea</taxon>
        <taxon>Methanobacteriati</taxon>
        <taxon>Methanobacteriota</taxon>
        <taxon>Methanomada group</taxon>
        <taxon>Methanococci</taxon>
        <taxon>Methanococcales</taxon>
        <taxon>Methanococcaceae</taxon>
        <taxon>Methanococcus</taxon>
    </lineage>
</organism>
<proteinExistence type="inferred from homology"/>
<comment type="function">
    <text evidence="1">Catalyzes the oxidative deamination and cyclization of 2-amino-3,7-dideoxy-D-threo-hept-6-ulosonic acid (ADH) to yield 3-dehydroquinate (DHQ), which is fed into the canonical shikimic pathway of aromatic amino acid biosynthesis.</text>
</comment>
<comment type="catalytic activity">
    <reaction evidence="1">
        <text>2-amino-2,3,7-trideoxy-D-lyxo-hept-6-ulosonate + NAD(+) + H2O = 3-dehydroquinate + NH4(+) + NADH + H(+)</text>
        <dbReference type="Rhea" id="RHEA:25956"/>
        <dbReference type="ChEBI" id="CHEBI:15377"/>
        <dbReference type="ChEBI" id="CHEBI:15378"/>
        <dbReference type="ChEBI" id="CHEBI:28938"/>
        <dbReference type="ChEBI" id="CHEBI:32364"/>
        <dbReference type="ChEBI" id="CHEBI:57540"/>
        <dbReference type="ChEBI" id="CHEBI:57945"/>
        <dbReference type="ChEBI" id="CHEBI:58859"/>
        <dbReference type="EC" id="1.4.1.24"/>
    </reaction>
</comment>
<comment type="disruption phenotype">
    <text evidence="2">Cells lacking this gene do not require either aromatic amino acids (AroAAs) or p-aminobenzoic acid (PABA) for growth, and growth is similar to that of the wild-type strain in minimal medium with acetate only. One possible explanation for this unexpected phenotype is that a second, presently unidentified ORF complements the function of aroB' in M.maripaludis.</text>
</comment>
<comment type="similarity">
    <text evidence="1">Belongs to the archaeal-type DHQ synthase family.</text>
</comment>
<evidence type="ECO:0000255" key="1">
    <source>
        <dbReference type="HAMAP-Rule" id="MF_01244"/>
    </source>
</evidence>
<evidence type="ECO:0000269" key="2">
    <source>
    </source>
</evidence>
<name>DHQS_METMP</name>
<accession>Q6M1B0</accession>
<sequence length="361" mass="40003">MKFGWIKTTGNDLEERMESVKDALESSIPGIIAEKEEISSVRELGNIKIVSDNLDADVVLINKGEDLEILKSAKLSGKETGVYVVINTKEDEVYATDVSKLDFVDYVVLEGSDWTIIPLENIIADLFSEEIKIVSVVTNVKDAEAAYEILEKGVDGVVLIPKDINEVKDFSKLIERMNSESVKLDYATVTKIEPVGSGDRVCIDTCSMMEMGEGMLIGSYSRGMFLVHSETVENPYVATRPFRVNAGPVHAYILCPENKTKYLSDLKAGDKVLVVNKNGETREAIIGRVKIEKRPLFLVEAEYNGENLRTILQNAETIRLVGEDGKPVSVVDLKVGTKVLIKPDENARHFGMAIKETIIEK</sequence>
<gene>
    <name evidence="1" type="primary">aroB'</name>
    <name type="ordered locus">MMP0006</name>
</gene>
<keyword id="KW-0028">Amino-acid biosynthesis</keyword>
<keyword id="KW-0057">Aromatic amino acid biosynthesis</keyword>
<keyword id="KW-0520">NAD</keyword>
<keyword id="KW-0560">Oxidoreductase</keyword>
<keyword id="KW-1185">Reference proteome</keyword>
<dbReference type="EC" id="1.4.1.24" evidence="1"/>
<dbReference type="EMBL" id="BX950229">
    <property type="protein sequence ID" value="CAF29562.1"/>
    <property type="molecule type" value="Genomic_DNA"/>
</dbReference>
<dbReference type="RefSeq" id="WP_011169950.1">
    <property type="nucleotide sequence ID" value="NC_005791.1"/>
</dbReference>
<dbReference type="STRING" id="267377.MMP0006"/>
<dbReference type="DNASU" id="2761850"/>
<dbReference type="EnsemblBacteria" id="CAF29562">
    <property type="protein sequence ID" value="CAF29562"/>
    <property type="gene ID" value="MMP0006"/>
</dbReference>
<dbReference type="GeneID" id="2761850"/>
<dbReference type="KEGG" id="mmp:MMP0006"/>
<dbReference type="PATRIC" id="fig|267377.15.peg.6"/>
<dbReference type="eggNOG" id="arCOG04353">
    <property type="taxonomic scope" value="Archaea"/>
</dbReference>
<dbReference type="HOGENOM" id="CLU_056379_0_0_2"/>
<dbReference type="OrthoDB" id="10265at2157"/>
<dbReference type="Proteomes" id="UP000000590">
    <property type="component" value="Chromosome"/>
</dbReference>
<dbReference type="GO" id="GO:0003856">
    <property type="term" value="F:3-dehydroquinate synthase activity"/>
    <property type="evidence" value="ECO:0007669"/>
    <property type="project" value="InterPro"/>
</dbReference>
<dbReference type="GO" id="GO:0102042">
    <property type="term" value="F:dehydroquinate synthase activity"/>
    <property type="evidence" value="ECO:0007669"/>
    <property type="project" value="UniProtKB-EC"/>
</dbReference>
<dbReference type="GO" id="GO:0051287">
    <property type="term" value="F:NAD binding"/>
    <property type="evidence" value="ECO:0007669"/>
    <property type="project" value="UniProtKB-UniRule"/>
</dbReference>
<dbReference type="GO" id="GO:0008652">
    <property type="term" value="P:amino acid biosynthetic process"/>
    <property type="evidence" value="ECO:0007669"/>
    <property type="project" value="UniProtKB-KW"/>
</dbReference>
<dbReference type="GO" id="GO:0009073">
    <property type="term" value="P:aromatic amino acid family biosynthetic process"/>
    <property type="evidence" value="ECO:0007669"/>
    <property type="project" value="UniProtKB-UniRule"/>
</dbReference>
<dbReference type="HAMAP" id="MF_01244">
    <property type="entry name" value="Arch_DHQ_synthase"/>
    <property type="match status" value="1"/>
</dbReference>
<dbReference type="InterPro" id="IPR002812">
    <property type="entry name" value="DHQ_synth"/>
</dbReference>
<dbReference type="NCBIfam" id="NF002624">
    <property type="entry name" value="PRK02290.1-2"/>
    <property type="match status" value="1"/>
</dbReference>
<dbReference type="PANTHER" id="PTHR33563">
    <property type="match status" value="1"/>
</dbReference>
<dbReference type="PANTHER" id="PTHR33563:SF1">
    <property type="entry name" value="3-DEHYDROQUINATE SYNTHASE"/>
    <property type="match status" value="1"/>
</dbReference>
<dbReference type="Pfam" id="PF01959">
    <property type="entry name" value="DHQS"/>
    <property type="match status" value="1"/>
</dbReference>
<dbReference type="PIRSF" id="PIRSF006655">
    <property type="entry name" value="DHQ_synth"/>
    <property type="match status" value="1"/>
</dbReference>
<feature type="chain" id="PRO_1000067068" description="3-dehydroquinate synthase">
    <location>
        <begin position="1"/>
        <end position="361"/>
    </location>
</feature>
<protein>
    <recommendedName>
        <fullName evidence="1">3-dehydroquinate synthase</fullName>
        <shortName evidence="1">DHQ synthase</shortName>
        <ecNumber evidence="1">1.4.1.24</ecNumber>
    </recommendedName>
    <alternativeName>
        <fullName evidence="1">3-dehydroquinate synthase II</fullName>
    </alternativeName>
</protein>